<gene>
    <name evidence="4" type="primary">potD</name>
    <name evidence="4" type="ordered locus">PA3610</name>
</gene>
<protein>
    <recommendedName>
        <fullName evidence="3">Putrescine/cadaverine-binding protein</fullName>
    </recommendedName>
</protein>
<proteinExistence type="evidence at protein level"/>
<keyword id="KW-0574">Periplasm</keyword>
<keyword id="KW-1185">Reference proteome</keyword>
<keyword id="KW-0732">Signal</keyword>
<keyword id="KW-0813">Transport</keyword>
<feature type="signal peptide" evidence="1">
    <location>
        <begin position="1"/>
        <end position="20"/>
    </location>
</feature>
<feature type="chain" id="PRO_5004331191" description="Putrescine/cadaverine-binding protein" evidence="1">
    <location>
        <begin position="21"/>
        <end position="354"/>
    </location>
</feature>
<reference key="1">
    <citation type="journal article" date="2000" name="Nature">
        <title>Complete genome sequence of Pseudomonas aeruginosa PAO1, an opportunistic pathogen.</title>
        <authorList>
            <person name="Stover C.K."/>
            <person name="Pham X.-Q.T."/>
            <person name="Erwin A.L."/>
            <person name="Mizoguchi S.D."/>
            <person name="Warrener P."/>
            <person name="Hickey M.J."/>
            <person name="Brinkman F.S.L."/>
            <person name="Hufnagle W.O."/>
            <person name="Kowalik D.J."/>
            <person name="Lagrou M."/>
            <person name="Garber R.L."/>
            <person name="Goltry L."/>
            <person name="Tolentino E."/>
            <person name="Westbrock-Wadman S."/>
            <person name="Yuan Y."/>
            <person name="Brody L.L."/>
            <person name="Coulter S.N."/>
            <person name="Folger K.R."/>
            <person name="Kas A."/>
            <person name="Larbig K."/>
            <person name="Lim R.M."/>
            <person name="Smith K.A."/>
            <person name="Spencer D.H."/>
            <person name="Wong G.K.-S."/>
            <person name="Wu Z."/>
            <person name="Paulsen I.T."/>
            <person name="Reizer J."/>
            <person name="Saier M.H. Jr."/>
            <person name="Hancock R.E.W."/>
            <person name="Lory S."/>
            <person name="Olson M.V."/>
        </authorList>
    </citation>
    <scope>NUCLEOTIDE SEQUENCE [LARGE SCALE GENOMIC DNA]</scope>
    <source>
        <strain>ATCC 15692 / DSM 22644 / CIP 104116 / JCM 14847 / LMG 12228 / 1C / PRS 101 / PAO1</strain>
    </source>
</reference>
<reference key="2">
    <citation type="journal article" date="2019" name="Int. J. Mol. Sci.">
        <title>Determination of Ligand Profiles for Pseudomonas aeruginosa Solute Binding Proteins.</title>
        <authorList>
            <person name="Fernandez M."/>
            <person name="Rico-Jimenez M."/>
            <person name="Ortega A."/>
            <person name="Daddaoua A."/>
            <person name="Garcia Garcia A.I."/>
            <person name="Martin-Mora D."/>
            <person name="Torres N.M."/>
            <person name="Tajuelo A."/>
            <person name="Matilla M.A."/>
            <person name="Krell T."/>
        </authorList>
    </citation>
    <scope>FUNCTION AS A BINDING PROTEIN</scope>
    <source>
        <strain>ATCC 15692 / DSM 22644 / CIP 104116 / JCM 14847 / LMG 12228 / 1C / PRS 101 / PAO1</strain>
    </source>
</reference>
<comment type="function">
    <text evidence="2">Binds putrescine and cadaverine.</text>
</comment>
<comment type="subcellular location">
    <subcellularLocation>
        <location evidence="3">Periplasm</location>
    </subcellularLocation>
</comment>
<comment type="similarity">
    <text evidence="3">Belongs to the bacterial solute-binding protein 1 family.</text>
</comment>
<organism>
    <name type="scientific">Pseudomonas aeruginosa (strain ATCC 15692 / DSM 22644 / CIP 104116 / JCM 14847 / LMG 12228 / 1C / PRS 101 / PAO1)</name>
    <dbReference type="NCBI Taxonomy" id="208964"/>
    <lineage>
        <taxon>Bacteria</taxon>
        <taxon>Pseudomonadati</taxon>
        <taxon>Pseudomonadota</taxon>
        <taxon>Gammaproteobacteria</taxon>
        <taxon>Pseudomonadales</taxon>
        <taxon>Pseudomonadaceae</taxon>
        <taxon>Pseudomonas</taxon>
    </lineage>
</organism>
<evidence type="ECO:0000255" key="1"/>
<evidence type="ECO:0000269" key="2">
    <source>
    </source>
</evidence>
<evidence type="ECO:0000305" key="3"/>
<evidence type="ECO:0000312" key="4">
    <source>
        <dbReference type="EMBL" id="AAG06998.1"/>
    </source>
</evidence>
<name>PCABP_PSEAE</name>
<sequence>MMKKLLLVATLMAGAAQATAAEKLYLFNWNDYIAEDTLKRFEQQCGCELVQEFYSGTEEMMAKLAAGASGYDVIIPTQNAVEALIRKGDLLELDKSRLANLSNEAAGYLDKDFDKGNRYSLPYAFTTTLVGYNKTELDKLGIDPADWSVIFDPAVLEKIKGRVTVMDDPQELFGAALKYLGHSANDTDPQHWKEAQALILAAKPYWAAFNSSSYIKELTLGNIWVAHGYSSDMYQARADAEAAGRAFKVDFALPRQGAVLAIDNMVIHKGSKNPDLAYRFIDFMLDGRNASELTNQIGTGTPNAAALPFIKPEIKTLAALFPDATTQARLEPLKDLNSRQRRALNKLWTEIKLR</sequence>
<accession>Q9HY16</accession>
<dbReference type="EMBL" id="AE004091">
    <property type="protein sequence ID" value="AAG06998.1"/>
    <property type="molecule type" value="Genomic_DNA"/>
</dbReference>
<dbReference type="PIR" id="G83194">
    <property type="entry name" value="G83194"/>
</dbReference>
<dbReference type="RefSeq" id="NP_252300.1">
    <property type="nucleotide sequence ID" value="NC_002516.2"/>
</dbReference>
<dbReference type="RefSeq" id="WP_003113877.1">
    <property type="nucleotide sequence ID" value="NZ_QZGE01000001.1"/>
</dbReference>
<dbReference type="SMR" id="Q9HY16"/>
<dbReference type="STRING" id="208964.PA3610"/>
<dbReference type="PaxDb" id="208964-PA3610"/>
<dbReference type="GeneID" id="880132"/>
<dbReference type="KEGG" id="pae:PA3610"/>
<dbReference type="PATRIC" id="fig|208964.12.peg.3777"/>
<dbReference type="PseudoCAP" id="PA3610"/>
<dbReference type="HOGENOM" id="CLU_026974_1_4_6"/>
<dbReference type="InParanoid" id="Q9HY16"/>
<dbReference type="OrthoDB" id="9769319at2"/>
<dbReference type="PhylomeDB" id="Q9HY16"/>
<dbReference type="BioCyc" id="PAER208964:G1FZ6-3679-MONOMER"/>
<dbReference type="Proteomes" id="UP000002438">
    <property type="component" value="Chromosome"/>
</dbReference>
<dbReference type="GO" id="GO:0042597">
    <property type="term" value="C:periplasmic space"/>
    <property type="evidence" value="ECO:0007669"/>
    <property type="project" value="UniProtKB-SubCell"/>
</dbReference>
<dbReference type="GO" id="GO:0019808">
    <property type="term" value="F:polyamine binding"/>
    <property type="evidence" value="ECO:0007669"/>
    <property type="project" value="InterPro"/>
</dbReference>
<dbReference type="GO" id="GO:0015846">
    <property type="term" value="P:polyamine transport"/>
    <property type="evidence" value="ECO:0007669"/>
    <property type="project" value="InterPro"/>
</dbReference>
<dbReference type="CDD" id="cd13590">
    <property type="entry name" value="PBP2_PotD_PotF_like"/>
    <property type="match status" value="1"/>
</dbReference>
<dbReference type="Gene3D" id="3.40.190.10">
    <property type="entry name" value="Periplasmic binding protein-like II"/>
    <property type="match status" value="2"/>
</dbReference>
<dbReference type="InterPro" id="IPR006059">
    <property type="entry name" value="SBP"/>
</dbReference>
<dbReference type="InterPro" id="IPR001188">
    <property type="entry name" value="Sperm_putr-bd"/>
</dbReference>
<dbReference type="PANTHER" id="PTHR30222">
    <property type="entry name" value="SPERMIDINE/PUTRESCINE-BINDING PERIPLASMIC PROTEIN"/>
    <property type="match status" value="1"/>
</dbReference>
<dbReference type="PANTHER" id="PTHR30222:SF17">
    <property type="entry name" value="SPERMIDINE_PUTRESCINE-BINDING PERIPLASMIC PROTEIN"/>
    <property type="match status" value="1"/>
</dbReference>
<dbReference type="Pfam" id="PF13416">
    <property type="entry name" value="SBP_bac_8"/>
    <property type="match status" value="1"/>
</dbReference>
<dbReference type="PIRSF" id="PIRSF019574">
    <property type="entry name" value="Periplasmic_polyamine_BP"/>
    <property type="match status" value="1"/>
</dbReference>
<dbReference type="PRINTS" id="PR00909">
    <property type="entry name" value="SPERMDNBNDNG"/>
</dbReference>
<dbReference type="SUPFAM" id="SSF53850">
    <property type="entry name" value="Periplasmic binding protein-like II"/>
    <property type="match status" value="1"/>
</dbReference>